<comment type="subcellular location">
    <subcellularLocation>
        <location evidence="2">Membrane</location>
        <topology evidence="2">Multi-pass membrane protein</topology>
    </subcellularLocation>
</comment>
<comment type="similarity">
    <text evidence="2">Belongs to the UPF0220 family.</text>
</comment>
<keyword id="KW-0472">Membrane</keyword>
<keyword id="KW-1185">Reference proteome</keyword>
<keyword id="KW-0812">Transmembrane</keyword>
<keyword id="KW-1133">Transmembrane helix</keyword>
<protein>
    <recommendedName>
        <fullName>Transmembrane protein 50 homolog</fullName>
    </recommendedName>
</protein>
<reference key="1">
    <citation type="journal article" date="2005" name="Nature">
        <title>The genome of the social amoeba Dictyostelium discoideum.</title>
        <authorList>
            <person name="Eichinger L."/>
            <person name="Pachebat J.A."/>
            <person name="Gloeckner G."/>
            <person name="Rajandream M.A."/>
            <person name="Sucgang R."/>
            <person name="Berriman M."/>
            <person name="Song J."/>
            <person name="Olsen R."/>
            <person name="Szafranski K."/>
            <person name="Xu Q."/>
            <person name="Tunggal B."/>
            <person name="Kummerfeld S."/>
            <person name="Madera M."/>
            <person name="Konfortov B.A."/>
            <person name="Rivero F."/>
            <person name="Bankier A.T."/>
            <person name="Lehmann R."/>
            <person name="Hamlin N."/>
            <person name="Davies R."/>
            <person name="Gaudet P."/>
            <person name="Fey P."/>
            <person name="Pilcher K."/>
            <person name="Chen G."/>
            <person name="Saunders D."/>
            <person name="Sodergren E.J."/>
            <person name="Davis P."/>
            <person name="Kerhornou A."/>
            <person name="Nie X."/>
            <person name="Hall N."/>
            <person name="Anjard C."/>
            <person name="Hemphill L."/>
            <person name="Bason N."/>
            <person name="Farbrother P."/>
            <person name="Desany B."/>
            <person name="Just E."/>
            <person name="Morio T."/>
            <person name="Rost R."/>
            <person name="Churcher C.M."/>
            <person name="Cooper J."/>
            <person name="Haydock S."/>
            <person name="van Driessche N."/>
            <person name="Cronin A."/>
            <person name="Goodhead I."/>
            <person name="Muzny D.M."/>
            <person name="Mourier T."/>
            <person name="Pain A."/>
            <person name="Lu M."/>
            <person name="Harper D."/>
            <person name="Lindsay R."/>
            <person name="Hauser H."/>
            <person name="James K.D."/>
            <person name="Quiles M."/>
            <person name="Madan Babu M."/>
            <person name="Saito T."/>
            <person name="Buchrieser C."/>
            <person name="Wardroper A."/>
            <person name="Felder M."/>
            <person name="Thangavelu M."/>
            <person name="Johnson D."/>
            <person name="Knights A."/>
            <person name="Loulseged H."/>
            <person name="Mungall K.L."/>
            <person name="Oliver K."/>
            <person name="Price C."/>
            <person name="Quail M.A."/>
            <person name="Urushihara H."/>
            <person name="Hernandez J."/>
            <person name="Rabbinowitsch E."/>
            <person name="Steffen D."/>
            <person name="Sanders M."/>
            <person name="Ma J."/>
            <person name="Kohara Y."/>
            <person name="Sharp S."/>
            <person name="Simmonds M.N."/>
            <person name="Spiegler S."/>
            <person name="Tivey A."/>
            <person name="Sugano S."/>
            <person name="White B."/>
            <person name="Walker D."/>
            <person name="Woodward J.R."/>
            <person name="Winckler T."/>
            <person name="Tanaka Y."/>
            <person name="Shaulsky G."/>
            <person name="Schleicher M."/>
            <person name="Weinstock G.M."/>
            <person name="Rosenthal A."/>
            <person name="Cox E.C."/>
            <person name="Chisholm R.L."/>
            <person name="Gibbs R.A."/>
            <person name="Loomis W.F."/>
            <person name="Platzer M."/>
            <person name="Kay R.R."/>
            <person name="Williams J.G."/>
            <person name="Dear P.H."/>
            <person name="Noegel A.A."/>
            <person name="Barrell B.G."/>
            <person name="Kuspa A."/>
        </authorList>
    </citation>
    <scope>NUCLEOTIDE SEQUENCE [LARGE SCALE GENOMIC DNA]</scope>
    <source>
        <strain>AX4</strain>
    </source>
</reference>
<accession>Q54T60</accession>
<name>TMM50_DICDI</name>
<sequence>MRKTIMKYLPALAGIIFTAGWFLWIDGHVYENTNNKNADFDGPHIQWIYYLPGIFATLGMVMANIVDLSALNSNSLLFDGGATKVRVWLFISFAISFGCIGAALWIMVAVFLPPHNTNDAAQWPGIAITLQTSLIFLSSLLLVFKKVRQDDEYDQF</sequence>
<dbReference type="EMBL" id="AAFI02000044">
    <property type="protein sequence ID" value="EAL66413.1"/>
    <property type="molecule type" value="Genomic_DNA"/>
</dbReference>
<dbReference type="RefSeq" id="XP_640391.1">
    <property type="nucleotide sequence ID" value="XM_635299.1"/>
</dbReference>
<dbReference type="FunCoup" id="Q54T60">
    <property type="interactions" value="504"/>
</dbReference>
<dbReference type="STRING" id="44689.Q54T60"/>
<dbReference type="PaxDb" id="44689-DDB0233326"/>
<dbReference type="EnsemblProtists" id="EAL66413">
    <property type="protein sequence ID" value="EAL66413"/>
    <property type="gene ID" value="DDB_G0281983"/>
</dbReference>
<dbReference type="GeneID" id="8623346"/>
<dbReference type="KEGG" id="ddi:DDB_G0281983"/>
<dbReference type="dictyBase" id="DDB_G0281983">
    <property type="gene designation" value="tmem50"/>
</dbReference>
<dbReference type="VEuPathDB" id="AmoebaDB:DDB_G0281983"/>
<dbReference type="eggNOG" id="KOG3393">
    <property type="taxonomic scope" value="Eukaryota"/>
</dbReference>
<dbReference type="HOGENOM" id="CLU_156199_0_0_1"/>
<dbReference type="InParanoid" id="Q54T60"/>
<dbReference type="OMA" id="VHITFVD"/>
<dbReference type="PhylomeDB" id="Q54T60"/>
<dbReference type="PRO" id="PR:Q54T60"/>
<dbReference type="Proteomes" id="UP000002195">
    <property type="component" value="Chromosome 3"/>
</dbReference>
<dbReference type="GO" id="GO:0016020">
    <property type="term" value="C:membrane"/>
    <property type="evidence" value="ECO:0007669"/>
    <property type="project" value="UniProtKB-SubCell"/>
</dbReference>
<dbReference type="GO" id="GO:0032511">
    <property type="term" value="P:late endosome to vacuole transport via multivesicular body sorting pathway"/>
    <property type="evidence" value="ECO:0000318"/>
    <property type="project" value="GO_Central"/>
</dbReference>
<dbReference type="InterPro" id="IPR007919">
    <property type="entry name" value="UPF0220"/>
</dbReference>
<dbReference type="PANTHER" id="PTHR13180">
    <property type="entry name" value="SMALL MEMBRANE PROTEIN-RELATED"/>
    <property type="match status" value="1"/>
</dbReference>
<dbReference type="Pfam" id="PF05255">
    <property type="entry name" value="UPF0220"/>
    <property type="match status" value="1"/>
</dbReference>
<gene>
    <name type="primary">tmem50</name>
    <name type="ORF">DDB_G0281983</name>
</gene>
<evidence type="ECO:0000255" key="1"/>
<evidence type="ECO:0000305" key="2"/>
<organism>
    <name type="scientific">Dictyostelium discoideum</name>
    <name type="common">Social amoeba</name>
    <dbReference type="NCBI Taxonomy" id="44689"/>
    <lineage>
        <taxon>Eukaryota</taxon>
        <taxon>Amoebozoa</taxon>
        <taxon>Evosea</taxon>
        <taxon>Eumycetozoa</taxon>
        <taxon>Dictyostelia</taxon>
        <taxon>Dictyosteliales</taxon>
        <taxon>Dictyosteliaceae</taxon>
        <taxon>Dictyostelium</taxon>
    </lineage>
</organism>
<proteinExistence type="inferred from homology"/>
<feature type="chain" id="PRO_0000328501" description="Transmembrane protein 50 homolog">
    <location>
        <begin position="1"/>
        <end position="156"/>
    </location>
</feature>
<feature type="transmembrane region" description="Helical" evidence="1">
    <location>
        <begin position="5"/>
        <end position="25"/>
    </location>
</feature>
<feature type="transmembrane region" description="Helical" evidence="1">
    <location>
        <begin position="45"/>
        <end position="65"/>
    </location>
</feature>
<feature type="transmembrane region" description="Helical" evidence="1">
    <location>
        <begin position="87"/>
        <end position="107"/>
    </location>
</feature>
<feature type="transmembrane region" description="Helical" evidence="1">
    <location>
        <begin position="124"/>
        <end position="144"/>
    </location>
</feature>